<evidence type="ECO:0000255" key="1">
    <source>
        <dbReference type="HAMAP-Rule" id="MF_01345"/>
    </source>
</evidence>
<evidence type="ECO:0000305" key="2"/>
<feature type="chain" id="PRO_0000255701" description="Small ribosomal subunit protein uS17">
    <location>
        <begin position="1"/>
        <end position="76"/>
    </location>
</feature>
<keyword id="KW-1185">Reference proteome</keyword>
<keyword id="KW-0687">Ribonucleoprotein</keyword>
<keyword id="KW-0689">Ribosomal protein</keyword>
<keyword id="KW-0694">RNA-binding</keyword>
<keyword id="KW-0699">rRNA-binding</keyword>
<protein>
    <recommendedName>
        <fullName evidence="1">Small ribosomal subunit protein uS17</fullName>
    </recommendedName>
    <alternativeName>
        <fullName evidence="2">30S ribosomal protein S17</fullName>
    </alternativeName>
</protein>
<gene>
    <name evidence="1" type="primary">rpsQ</name>
    <name type="ordered locus">TM1040_0263</name>
</gene>
<proteinExistence type="inferred from homology"/>
<reference key="1">
    <citation type="submission" date="2006-05" db="EMBL/GenBank/DDBJ databases">
        <title>Complete sequence of chromosome of Silicibacter sp. TM1040.</title>
        <authorList>
            <consortium name="US DOE Joint Genome Institute"/>
            <person name="Copeland A."/>
            <person name="Lucas S."/>
            <person name="Lapidus A."/>
            <person name="Barry K."/>
            <person name="Detter J.C."/>
            <person name="Glavina del Rio T."/>
            <person name="Hammon N."/>
            <person name="Israni S."/>
            <person name="Dalin E."/>
            <person name="Tice H."/>
            <person name="Pitluck S."/>
            <person name="Brettin T."/>
            <person name="Bruce D."/>
            <person name="Han C."/>
            <person name="Tapia R."/>
            <person name="Goodwin L."/>
            <person name="Thompson L.S."/>
            <person name="Gilna P."/>
            <person name="Schmutz J."/>
            <person name="Larimer F."/>
            <person name="Land M."/>
            <person name="Hauser L."/>
            <person name="Kyrpides N."/>
            <person name="Kim E."/>
            <person name="Belas R."/>
            <person name="Moran M.A."/>
            <person name="Buchan A."/>
            <person name="Gonzalez J.M."/>
            <person name="Schell M.A."/>
            <person name="Sun F."/>
            <person name="Richardson P."/>
        </authorList>
    </citation>
    <scope>NUCLEOTIDE SEQUENCE [LARGE SCALE GENOMIC DNA]</scope>
    <source>
        <strain>TM1040</strain>
    </source>
</reference>
<accession>Q1GK20</accession>
<name>RS17_RUEST</name>
<dbReference type="EMBL" id="CP000377">
    <property type="protein sequence ID" value="ABF62996.1"/>
    <property type="molecule type" value="Genomic_DNA"/>
</dbReference>
<dbReference type="RefSeq" id="WP_008555996.1">
    <property type="nucleotide sequence ID" value="NC_008044.1"/>
</dbReference>
<dbReference type="SMR" id="Q1GK20"/>
<dbReference type="STRING" id="292414.TM1040_0263"/>
<dbReference type="KEGG" id="sit:TM1040_0263"/>
<dbReference type="eggNOG" id="COG0186">
    <property type="taxonomic scope" value="Bacteria"/>
</dbReference>
<dbReference type="HOGENOM" id="CLU_073626_1_1_5"/>
<dbReference type="OrthoDB" id="9811714at2"/>
<dbReference type="Proteomes" id="UP000000636">
    <property type="component" value="Chromosome"/>
</dbReference>
<dbReference type="GO" id="GO:0022627">
    <property type="term" value="C:cytosolic small ribosomal subunit"/>
    <property type="evidence" value="ECO:0007669"/>
    <property type="project" value="TreeGrafter"/>
</dbReference>
<dbReference type="GO" id="GO:0019843">
    <property type="term" value="F:rRNA binding"/>
    <property type="evidence" value="ECO:0007669"/>
    <property type="project" value="UniProtKB-UniRule"/>
</dbReference>
<dbReference type="GO" id="GO:0003735">
    <property type="term" value="F:structural constituent of ribosome"/>
    <property type="evidence" value="ECO:0007669"/>
    <property type="project" value="InterPro"/>
</dbReference>
<dbReference type="GO" id="GO:0006412">
    <property type="term" value="P:translation"/>
    <property type="evidence" value="ECO:0007669"/>
    <property type="project" value="UniProtKB-UniRule"/>
</dbReference>
<dbReference type="CDD" id="cd00364">
    <property type="entry name" value="Ribosomal_uS17"/>
    <property type="match status" value="1"/>
</dbReference>
<dbReference type="Gene3D" id="2.40.50.140">
    <property type="entry name" value="Nucleic acid-binding proteins"/>
    <property type="match status" value="1"/>
</dbReference>
<dbReference type="HAMAP" id="MF_01345_B">
    <property type="entry name" value="Ribosomal_uS17_B"/>
    <property type="match status" value="1"/>
</dbReference>
<dbReference type="InterPro" id="IPR012340">
    <property type="entry name" value="NA-bd_OB-fold"/>
</dbReference>
<dbReference type="InterPro" id="IPR000266">
    <property type="entry name" value="Ribosomal_uS17"/>
</dbReference>
<dbReference type="InterPro" id="IPR019984">
    <property type="entry name" value="Ribosomal_uS17_bact/chlr"/>
</dbReference>
<dbReference type="NCBIfam" id="NF004123">
    <property type="entry name" value="PRK05610.1"/>
    <property type="match status" value="1"/>
</dbReference>
<dbReference type="NCBIfam" id="TIGR03635">
    <property type="entry name" value="uS17_bact"/>
    <property type="match status" value="1"/>
</dbReference>
<dbReference type="PANTHER" id="PTHR10744">
    <property type="entry name" value="40S RIBOSOMAL PROTEIN S11 FAMILY MEMBER"/>
    <property type="match status" value="1"/>
</dbReference>
<dbReference type="PANTHER" id="PTHR10744:SF1">
    <property type="entry name" value="SMALL RIBOSOMAL SUBUNIT PROTEIN US17M"/>
    <property type="match status" value="1"/>
</dbReference>
<dbReference type="Pfam" id="PF00366">
    <property type="entry name" value="Ribosomal_S17"/>
    <property type="match status" value="1"/>
</dbReference>
<dbReference type="PRINTS" id="PR00973">
    <property type="entry name" value="RIBOSOMALS17"/>
</dbReference>
<dbReference type="SUPFAM" id="SSF50249">
    <property type="entry name" value="Nucleic acid-binding proteins"/>
    <property type="match status" value="1"/>
</dbReference>
<comment type="function">
    <text evidence="1">One of the primary rRNA binding proteins, it binds specifically to the 5'-end of 16S ribosomal RNA.</text>
</comment>
<comment type="subunit">
    <text evidence="1">Part of the 30S ribosomal subunit.</text>
</comment>
<comment type="similarity">
    <text evidence="1">Belongs to the universal ribosomal protein uS17 family.</text>
</comment>
<organism>
    <name type="scientific">Ruegeria sp. (strain TM1040)</name>
    <name type="common">Silicibacter sp.</name>
    <dbReference type="NCBI Taxonomy" id="292414"/>
    <lineage>
        <taxon>Bacteria</taxon>
        <taxon>Pseudomonadati</taxon>
        <taxon>Pseudomonadota</taxon>
        <taxon>Alphaproteobacteria</taxon>
        <taxon>Rhodobacterales</taxon>
        <taxon>Roseobacteraceae</taxon>
        <taxon>Ruegeria</taxon>
    </lineage>
</organism>
<sequence>MPKRILQGVVTSDANAQTVTVSVERRFTHPVLKKTIRKSKKYRAHDEKNAFKVGDTVRIIECAPKSKTKRWEVLEA</sequence>